<protein>
    <recommendedName>
        <fullName evidence="1">Protein translocase subunit SecA</fullName>
        <ecNumber evidence="1">7.4.2.8</ecNumber>
    </recommendedName>
</protein>
<reference key="1">
    <citation type="journal article" date="2004" name="Nat. Biotechnol.">
        <title>Complete sequence and comparative genome analysis of the dairy bacterium Streptococcus thermophilus.</title>
        <authorList>
            <person name="Bolotin A."/>
            <person name="Quinquis B."/>
            <person name="Renault P."/>
            <person name="Sorokin A."/>
            <person name="Ehrlich S.D."/>
            <person name="Kulakauskas S."/>
            <person name="Lapidus A."/>
            <person name="Goltsman E."/>
            <person name="Mazur M."/>
            <person name="Pusch G.D."/>
            <person name="Fonstein M."/>
            <person name="Overbeek R."/>
            <person name="Kyprides N."/>
            <person name="Purnelle B."/>
            <person name="Prozzi D."/>
            <person name="Ngui K."/>
            <person name="Masuy D."/>
            <person name="Hancy F."/>
            <person name="Burteau S."/>
            <person name="Boutry M."/>
            <person name="Delcour J."/>
            <person name="Goffeau A."/>
            <person name="Hols P."/>
        </authorList>
    </citation>
    <scope>NUCLEOTIDE SEQUENCE [LARGE SCALE GENOMIC DNA]</scope>
    <source>
        <strain>ATCC BAA-250 / LMG 18311</strain>
    </source>
</reference>
<comment type="function">
    <text evidence="1">Part of the Sec protein translocase complex. Interacts with the SecYEG preprotein conducting channel. Has a central role in coupling the hydrolysis of ATP to the transfer of proteins into and across the cell membrane, serving as an ATP-driven molecular motor driving the stepwise translocation of polypeptide chains across the membrane.</text>
</comment>
<comment type="catalytic activity">
    <reaction evidence="1">
        <text>ATP + H2O + cellular proteinSide 1 = ADP + phosphate + cellular proteinSide 2.</text>
        <dbReference type="EC" id="7.4.2.8"/>
    </reaction>
</comment>
<comment type="cofactor">
    <cofactor evidence="1">
        <name>Zn(2+)</name>
        <dbReference type="ChEBI" id="CHEBI:29105"/>
    </cofactor>
    <text evidence="1">May bind 1 zinc ion per subunit.</text>
</comment>
<comment type="subunit">
    <text evidence="1">Monomer and homodimer. Part of the essential Sec protein translocation apparatus which comprises SecA, SecYEG and auxiliary proteins SecDF. Other proteins may also be involved.</text>
</comment>
<comment type="subcellular location">
    <subcellularLocation>
        <location evidence="1">Cell membrane</location>
        <topology evidence="1">Peripheral membrane protein</topology>
        <orientation evidence="1">Cytoplasmic side</orientation>
    </subcellularLocation>
    <subcellularLocation>
        <location evidence="1">Cytoplasm</location>
    </subcellularLocation>
    <text evidence="1">Distribution is 50-50.</text>
</comment>
<comment type="similarity">
    <text evidence="1">Belongs to the SecA family.</text>
</comment>
<proteinExistence type="inferred from homology"/>
<keyword id="KW-0067">ATP-binding</keyword>
<keyword id="KW-1003">Cell membrane</keyword>
<keyword id="KW-0963">Cytoplasm</keyword>
<keyword id="KW-0472">Membrane</keyword>
<keyword id="KW-0479">Metal-binding</keyword>
<keyword id="KW-0547">Nucleotide-binding</keyword>
<keyword id="KW-0653">Protein transport</keyword>
<keyword id="KW-1185">Reference proteome</keyword>
<keyword id="KW-1278">Translocase</keyword>
<keyword id="KW-0811">Translocation</keyword>
<keyword id="KW-0813">Transport</keyword>
<keyword id="KW-0862">Zinc</keyword>
<name>SECA_STRT2</name>
<dbReference type="EC" id="7.4.2.8" evidence="1"/>
<dbReference type="EMBL" id="CP000023">
    <property type="protein sequence ID" value="AAV61329.1"/>
    <property type="molecule type" value="Genomic_DNA"/>
</dbReference>
<dbReference type="RefSeq" id="WP_011226533.1">
    <property type="nucleotide sequence ID" value="NC_006448.1"/>
</dbReference>
<dbReference type="SMR" id="Q5M2S3"/>
<dbReference type="STRING" id="264199.stu1730"/>
<dbReference type="GeneID" id="66899467"/>
<dbReference type="KEGG" id="stl:stu1730"/>
<dbReference type="PATRIC" id="fig|264199.4.peg.1705"/>
<dbReference type="eggNOG" id="COG0653">
    <property type="taxonomic scope" value="Bacteria"/>
</dbReference>
<dbReference type="HOGENOM" id="CLU_005314_3_0_9"/>
<dbReference type="Proteomes" id="UP000001170">
    <property type="component" value="Chromosome"/>
</dbReference>
<dbReference type="GO" id="GO:0031522">
    <property type="term" value="C:cell envelope Sec protein transport complex"/>
    <property type="evidence" value="ECO:0007669"/>
    <property type="project" value="TreeGrafter"/>
</dbReference>
<dbReference type="GO" id="GO:0005829">
    <property type="term" value="C:cytosol"/>
    <property type="evidence" value="ECO:0007669"/>
    <property type="project" value="TreeGrafter"/>
</dbReference>
<dbReference type="GO" id="GO:0005886">
    <property type="term" value="C:plasma membrane"/>
    <property type="evidence" value="ECO:0007669"/>
    <property type="project" value="UniProtKB-SubCell"/>
</dbReference>
<dbReference type="GO" id="GO:0005524">
    <property type="term" value="F:ATP binding"/>
    <property type="evidence" value="ECO:0007669"/>
    <property type="project" value="UniProtKB-UniRule"/>
</dbReference>
<dbReference type="GO" id="GO:0046872">
    <property type="term" value="F:metal ion binding"/>
    <property type="evidence" value="ECO:0007669"/>
    <property type="project" value="UniProtKB-KW"/>
</dbReference>
<dbReference type="GO" id="GO:0008564">
    <property type="term" value="F:protein-exporting ATPase activity"/>
    <property type="evidence" value="ECO:0007669"/>
    <property type="project" value="UniProtKB-EC"/>
</dbReference>
<dbReference type="GO" id="GO:0065002">
    <property type="term" value="P:intracellular protein transmembrane transport"/>
    <property type="evidence" value="ECO:0007669"/>
    <property type="project" value="UniProtKB-UniRule"/>
</dbReference>
<dbReference type="GO" id="GO:0017038">
    <property type="term" value="P:protein import"/>
    <property type="evidence" value="ECO:0007669"/>
    <property type="project" value="InterPro"/>
</dbReference>
<dbReference type="GO" id="GO:0006605">
    <property type="term" value="P:protein targeting"/>
    <property type="evidence" value="ECO:0007669"/>
    <property type="project" value="UniProtKB-UniRule"/>
</dbReference>
<dbReference type="GO" id="GO:0043952">
    <property type="term" value="P:protein transport by the Sec complex"/>
    <property type="evidence" value="ECO:0007669"/>
    <property type="project" value="TreeGrafter"/>
</dbReference>
<dbReference type="CDD" id="cd17928">
    <property type="entry name" value="DEXDc_SecA"/>
    <property type="match status" value="1"/>
</dbReference>
<dbReference type="CDD" id="cd18803">
    <property type="entry name" value="SF2_C_secA"/>
    <property type="match status" value="1"/>
</dbReference>
<dbReference type="FunFam" id="3.40.50.300:FF:000429">
    <property type="entry name" value="Preprotein translocase subunit SecA"/>
    <property type="match status" value="1"/>
</dbReference>
<dbReference type="FunFam" id="3.90.1440.10:FF:000001">
    <property type="entry name" value="Preprotein translocase subunit SecA"/>
    <property type="match status" value="1"/>
</dbReference>
<dbReference type="Gene3D" id="1.10.3060.10">
    <property type="entry name" value="Helical scaffold and wing domains of SecA"/>
    <property type="match status" value="1"/>
</dbReference>
<dbReference type="Gene3D" id="3.40.50.300">
    <property type="entry name" value="P-loop containing nucleotide triphosphate hydrolases"/>
    <property type="match status" value="3"/>
</dbReference>
<dbReference type="Gene3D" id="3.90.1440.10">
    <property type="entry name" value="SecA, preprotein cross-linking domain"/>
    <property type="match status" value="1"/>
</dbReference>
<dbReference type="HAMAP" id="MF_01382">
    <property type="entry name" value="SecA"/>
    <property type="match status" value="1"/>
</dbReference>
<dbReference type="InterPro" id="IPR014001">
    <property type="entry name" value="Helicase_ATP-bd"/>
</dbReference>
<dbReference type="InterPro" id="IPR001650">
    <property type="entry name" value="Helicase_C-like"/>
</dbReference>
<dbReference type="InterPro" id="IPR027417">
    <property type="entry name" value="P-loop_NTPase"/>
</dbReference>
<dbReference type="InterPro" id="IPR004027">
    <property type="entry name" value="SEC_C_motif"/>
</dbReference>
<dbReference type="InterPro" id="IPR000185">
    <property type="entry name" value="SecA"/>
</dbReference>
<dbReference type="InterPro" id="IPR020937">
    <property type="entry name" value="SecA_CS"/>
</dbReference>
<dbReference type="InterPro" id="IPR011115">
    <property type="entry name" value="SecA_DEAD"/>
</dbReference>
<dbReference type="InterPro" id="IPR014018">
    <property type="entry name" value="SecA_motor_DEAD"/>
</dbReference>
<dbReference type="InterPro" id="IPR011130">
    <property type="entry name" value="SecA_preprotein_X-link_dom"/>
</dbReference>
<dbReference type="InterPro" id="IPR044722">
    <property type="entry name" value="SecA_SF2_C"/>
</dbReference>
<dbReference type="InterPro" id="IPR011116">
    <property type="entry name" value="SecA_Wing/Scaffold"/>
</dbReference>
<dbReference type="InterPro" id="IPR036266">
    <property type="entry name" value="SecA_Wing/Scaffold_sf"/>
</dbReference>
<dbReference type="InterPro" id="IPR036670">
    <property type="entry name" value="SecA_X-link_sf"/>
</dbReference>
<dbReference type="NCBIfam" id="NF006630">
    <property type="entry name" value="PRK09200.1"/>
    <property type="match status" value="1"/>
</dbReference>
<dbReference type="NCBIfam" id="TIGR00963">
    <property type="entry name" value="secA"/>
    <property type="match status" value="1"/>
</dbReference>
<dbReference type="PANTHER" id="PTHR30612:SF0">
    <property type="entry name" value="CHLOROPLAST PROTEIN-TRANSPORTING ATPASE"/>
    <property type="match status" value="1"/>
</dbReference>
<dbReference type="PANTHER" id="PTHR30612">
    <property type="entry name" value="SECA INNER MEMBRANE COMPONENT OF SEC PROTEIN SECRETION SYSTEM"/>
    <property type="match status" value="1"/>
</dbReference>
<dbReference type="Pfam" id="PF21090">
    <property type="entry name" value="P-loop_SecA"/>
    <property type="match status" value="1"/>
</dbReference>
<dbReference type="Pfam" id="PF02810">
    <property type="entry name" value="SEC-C"/>
    <property type="match status" value="1"/>
</dbReference>
<dbReference type="Pfam" id="PF07517">
    <property type="entry name" value="SecA_DEAD"/>
    <property type="match status" value="1"/>
</dbReference>
<dbReference type="Pfam" id="PF01043">
    <property type="entry name" value="SecA_PP_bind"/>
    <property type="match status" value="1"/>
</dbReference>
<dbReference type="Pfam" id="PF07516">
    <property type="entry name" value="SecA_SW"/>
    <property type="match status" value="1"/>
</dbReference>
<dbReference type="PRINTS" id="PR00906">
    <property type="entry name" value="SECA"/>
</dbReference>
<dbReference type="SMART" id="SM00957">
    <property type="entry name" value="SecA_DEAD"/>
    <property type="match status" value="1"/>
</dbReference>
<dbReference type="SMART" id="SM00958">
    <property type="entry name" value="SecA_PP_bind"/>
    <property type="match status" value="1"/>
</dbReference>
<dbReference type="SUPFAM" id="SSF81886">
    <property type="entry name" value="Helical scaffold and wing domains of SecA"/>
    <property type="match status" value="1"/>
</dbReference>
<dbReference type="SUPFAM" id="SSF52540">
    <property type="entry name" value="P-loop containing nucleoside triphosphate hydrolases"/>
    <property type="match status" value="2"/>
</dbReference>
<dbReference type="SUPFAM" id="SSF81767">
    <property type="entry name" value="Pre-protein crosslinking domain of SecA"/>
    <property type="match status" value="1"/>
</dbReference>
<dbReference type="PROSITE" id="PS01312">
    <property type="entry name" value="SECA"/>
    <property type="match status" value="1"/>
</dbReference>
<dbReference type="PROSITE" id="PS51196">
    <property type="entry name" value="SECA_MOTOR_DEAD"/>
    <property type="match status" value="1"/>
</dbReference>
<organism>
    <name type="scientific">Streptococcus thermophilus (strain ATCC BAA-250 / LMG 18311)</name>
    <dbReference type="NCBI Taxonomy" id="264199"/>
    <lineage>
        <taxon>Bacteria</taxon>
        <taxon>Bacillati</taxon>
        <taxon>Bacillota</taxon>
        <taxon>Bacilli</taxon>
        <taxon>Lactobacillales</taxon>
        <taxon>Streptococcaceae</taxon>
        <taxon>Streptococcus</taxon>
    </lineage>
</organism>
<gene>
    <name evidence="1" type="primary">secA</name>
    <name type="ordered locus">stu1730</name>
</gene>
<evidence type="ECO:0000255" key="1">
    <source>
        <dbReference type="HAMAP-Rule" id="MF_01382"/>
    </source>
</evidence>
<feature type="chain" id="PRO_0000318460" description="Protein translocase subunit SecA">
    <location>
        <begin position="1"/>
        <end position="849"/>
    </location>
</feature>
<feature type="binding site" evidence="1">
    <location>
        <position position="85"/>
    </location>
    <ligand>
        <name>ATP</name>
        <dbReference type="ChEBI" id="CHEBI:30616"/>
    </ligand>
</feature>
<feature type="binding site" evidence="1">
    <location>
        <begin position="103"/>
        <end position="107"/>
    </location>
    <ligand>
        <name>ATP</name>
        <dbReference type="ChEBI" id="CHEBI:30616"/>
    </ligand>
</feature>
<feature type="binding site" evidence="1">
    <location>
        <position position="493"/>
    </location>
    <ligand>
        <name>ATP</name>
        <dbReference type="ChEBI" id="CHEBI:30616"/>
    </ligand>
</feature>
<feature type="binding site" evidence="1">
    <location>
        <position position="832"/>
    </location>
    <ligand>
        <name>Zn(2+)</name>
        <dbReference type="ChEBI" id="CHEBI:29105"/>
    </ligand>
</feature>
<feature type="binding site" evidence="1">
    <location>
        <position position="834"/>
    </location>
    <ligand>
        <name>Zn(2+)</name>
        <dbReference type="ChEBI" id="CHEBI:29105"/>
    </ligand>
</feature>
<feature type="binding site" evidence="1">
    <location>
        <position position="843"/>
    </location>
    <ligand>
        <name>Zn(2+)</name>
        <dbReference type="ChEBI" id="CHEBI:29105"/>
    </ligand>
</feature>
<feature type="binding site" evidence="1">
    <location>
        <position position="844"/>
    </location>
    <ligand>
        <name>Zn(2+)</name>
        <dbReference type="ChEBI" id="CHEBI:29105"/>
    </ligand>
</feature>
<accession>Q5M2S3</accession>
<sequence>MANILRKIIENDKGEIKKLEKTAKKVESYADAMAALSDEELQAKTEEFKQRYQNGESLDQLLPEAFAVVREGAKRVLGLFPYRVQIMGGIVLHHGDVAEMRTGEGKTLTATMPVYLNAISGEGVHVITVNEYLSERDATEMGELYSWLGLSVGINLSSKSPAEKREAYNCDITYSTSSEVGFDYLRDNMVVRKENMVQRPLNFALVDEVDSVLIDEARTPLIVSGPVSSETNQLYHRADAFVKTLTEDDYAIDIPTKTIGLNDSGIDKAEEFFNLENLYDIDNVALTHYIDNALRANYIMLRDIDYVVSPEQEILIVDQFTGRTMEGRRFSDGLHQAIEAKEGVPVQEETKTSASITYQNMFRMYKKLSGMTGTGKTEEDEFREIYNMRVIPIPTNRPIQRIDHDDLLYSTLDAKFRAVVQDVKRRYEKGQPVLIGTVAVETSDLISKMLVDAGIPHEVLNAKNHEKEAHIIMNAGQRGAVTIATNMAGRGTDIKLGEGVLELGGLCVIGTERHESRRIDNQLRGRSGRQGDPGESQFYLSLEDELMRRFGSDRIKHVLERLNADDEDIVIKSRMLTRQVESAQKRVEGNNYDTRKQVLQYDDVMREQREIIYAERYDVITAERDLEPEIKAMIKRTINRTVDGHSRNDQEEALKGILNFARQALVPEDAISLEDLKEVGEVTKRSVNYDAIKVYLTELADNVYDRQIKKLRSEEAIREFQKVLILMVVDNKWTDHIDALDQLRNAVGMRGYAQNNPIVEYQSESFKMFQDMIGAIEYDVTRTMMKAQIHEQSREHVNERVSTTATGNIQAHQADANGQEIDFSKVGRNDFCPCGSGKKFKNCHGRKQF</sequence>